<evidence type="ECO:0000255" key="1">
    <source>
        <dbReference type="HAMAP-Rule" id="MF_01199"/>
    </source>
</evidence>
<name>IRAM_KLEP3</name>
<gene>
    <name evidence="1" type="primary">iraM</name>
    <name type="ordered locus">KPK_5217</name>
</gene>
<reference key="1">
    <citation type="journal article" date="2008" name="PLoS Genet.">
        <title>Complete genome sequence of the N2-fixing broad host range endophyte Klebsiella pneumoniae 342 and virulence predictions verified in mice.</title>
        <authorList>
            <person name="Fouts D.E."/>
            <person name="Tyler H.L."/>
            <person name="DeBoy R.T."/>
            <person name="Daugherty S."/>
            <person name="Ren Q."/>
            <person name="Badger J.H."/>
            <person name="Durkin A.S."/>
            <person name="Huot H."/>
            <person name="Shrivastava S."/>
            <person name="Kothari S."/>
            <person name="Dodson R.J."/>
            <person name="Mohamoud Y."/>
            <person name="Khouri H."/>
            <person name="Roesch L.F.W."/>
            <person name="Krogfelt K.A."/>
            <person name="Struve C."/>
            <person name="Triplett E.W."/>
            <person name="Methe B.A."/>
        </authorList>
    </citation>
    <scope>NUCLEOTIDE SEQUENCE [LARGE SCALE GENOMIC DNA]</scope>
    <source>
        <strain>342</strain>
    </source>
</reference>
<dbReference type="EMBL" id="CP000964">
    <property type="protein sequence ID" value="ACI11286.1"/>
    <property type="molecule type" value="Genomic_DNA"/>
</dbReference>
<dbReference type="SMR" id="B5XXW1"/>
<dbReference type="KEGG" id="kpe:KPK_5217"/>
<dbReference type="HOGENOM" id="CLU_143527_1_0_6"/>
<dbReference type="Proteomes" id="UP000001734">
    <property type="component" value="Chromosome"/>
</dbReference>
<dbReference type="GO" id="GO:0005737">
    <property type="term" value="C:cytoplasm"/>
    <property type="evidence" value="ECO:0007669"/>
    <property type="project" value="UniProtKB-SubCell"/>
</dbReference>
<dbReference type="GO" id="GO:0009267">
    <property type="term" value="P:cellular response to starvation"/>
    <property type="evidence" value="ECO:0007669"/>
    <property type="project" value="UniProtKB-UniRule"/>
</dbReference>
<dbReference type="Gene3D" id="2.40.50.650">
    <property type="match status" value="1"/>
</dbReference>
<dbReference type="HAMAP" id="MF_01199">
    <property type="entry name" value="Anti_adapt_IraM"/>
    <property type="match status" value="1"/>
</dbReference>
<dbReference type="InterPro" id="IPR014448">
    <property type="entry name" value="Anti-adapter_IraM"/>
</dbReference>
<dbReference type="InterPro" id="IPR038679">
    <property type="entry name" value="PmrD_sf"/>
</dbReference>
<dbReference type="NCBIfam" id="NF007393">
    <property type="entry name" value="PRK09919.1"/>
    <property type="match status" value="1"/>
</dbReference>
<organism>
    <name type="scientific">Klebsiella pneumoniae (strain 342)</name>
    <dbReference type="NCBI Taxonomy" id="507522"/>
    <lineage>
        <taxon>Bacteria</taxon>
        <taxon>Pseudomonadati</taxon>
        <taxon>Pseudomonadota</taxon>
        <taxon>Gammaproteobacteria</taxon>
        <taxon>Enterobacterales</taxon>
        <taxon>Enterobacteriaceae</taxon>
        <taxon>Klebsiella/Raoultella group</taxon>
        <taxon>Klebsiella</taxon>
        <taxon>Klebsiella pneumoniae complex</taxon>
    </lineage>
</organism>
<protein>
    <recommendedName>
        <fullName evidence="1">Anti-adapter protein IraM</fullName>
    </recommendedName>
</protein>
<feature type="chain" id="PRO_0000390389" description="Anti-adapter protein IraM">
    <location>
        <begin position="1"/>
        <end position="117"/>
    </location>
</feature>
<accession>B5XXW1</accession>
<sequence length="117" mass="13650">MKWTILNTLICPQSGIAFSAISSLRFLKFIMWYEADVILLPGESMKLYSSRVLINDQYHSLKIYNITVYDEAQWEKLRERPSCPYQAGGKQSDSCFFQSFCAIKRCPNNIPRGEPWR</sequence>
<proteinExistence type="inferred from homology"/>
<keyword id="KW-0963">Cytoplasm</keyword>
<keyword id="KW-0346">Stress response</keyword>
<comment type="function">
    <text evidence="1">Involved in the stabilization of the sigma stress factor RpoS.</text>
</comment>
<comment type="subcellular location">
    <subcellularLocation>
        <location evidence="1">Cytoplasm</location>
    </subcellularLocation>
</comment>
<comment type="similarity">
    <text evidence="1">Belongs to the IraM/RssC family.</text>
</comment>